<dbReference type="EC" id="4.1.2.4" evidence="1"/>
<dbReference type="EMBL" id="BA000043">
    <property type="protein sequence ID" value="BAD76784.1"/>
    <property type="status" value="ALT_INIT"/>
    <property type="molecule type" value="Genomic_DNA"/>
</dbReference>
<dbReference type="RefSeq" id="WP_014196373.1">
    <property type="nucleotide sequence ID" value="NC_006510.1"/>
</dbReference>
<dbReference type="PDB" id="8QPS">
    <property type="method" value="X-ray"/>
    <property type="resolution" value="1.64 A"/>
    <property type="chains" value="A/B=2-223"/>
</dbReference>
<dbReference type="PDBsum" id="8QPS"/>
<dbReference type="SMR" id="Q5KX02"/>
<dbReference type="STRING" id="235909.GK2499"/>
<dbReference type="KEGG" id="gka:GK2499"/>
<dbReference type="eggNOG" id="COG0274">
    <property type="taxonomic scope" value="Bacteria"/>
</dbReference>
<dbReference type="HOGENOM" id="CLU_053595_0_2_9"/>
<dbReference type="UniPathway" id="UPA00002">
    <property type="reaction ID" value="UER00468"/>
</dbReference>
<dbReference type="Proteomes" id="UP000001172">
    <property type="component" value="Chromosome"/>
</dbReference>
<dbReference type="GO" id="GO:0005737">
    <property type="term" value="C:cytoplasm"/>
    <property type="evidence" value="ECO:0007669"/>
    <property type="project" value="UniProtKB-SubCell"/>
</dbReference>
<dbReference type="GO" id="GO:0004139">
    <property type="term" value="F:deoxyribose-phosphate aldolase activity"/>
    <property type="evidence" value="ECO:0007669"/>
    <property type="project" value="UniProtKB-UniRule"/>
</dbReference>
<dbReference type="GO" id="GO:0006018">
    <property type="term" value="P:2-deoxyribose 1-phosphate catabolic process"/>
    <property type="evidence" value="ECO:0007669"/>
    <property type="project" value="UniProtKB-UniRule"/>
</dbReference>
<dbReference type="GO" id="GO:0016052">
    <property type="term" value="P:carbohydrate catabolic process"/>
    <property type="evidence" value="ECO:0007669"/>
    <property type="project" value="TreeGrafter"/>
</dbReference>
<dbReference type="GO" id="GO:0009264">
    <property type="term" value="P:deoxyribonucleotide catabolic process"/>
    <property type="evidence" value="ECO:0007669"/>
    <property type="project" value="InterPro"/>
</dbReference>
<dbReference type="CDD" id="cd00959">
    <property type="entry name" value="DeoC"/>
    <property type="match status" value="1"/>
</dbReference>
<dbReference type="FunFam" id="3.20.20.70:FF:000044">
    <property type="entry name" value="Deoxyribose-phosphate aldolase"/>
    <property type="match status" value="1"/>
</dbReference>
<dbReference type="Gene3D" id="3.20.20.70">
    <property type="entry name" value="Aldolase class I"/>
    <property type="match status" value="1"/>
</dbReference>
<dbReference type="HAMAP" id="MF_00114">
    <property type="entry name" value="DeoC_type1"/>
    <property type="match status" value="1"/>
</dbReference>
<dbReference type="InterPro" id="IPR013785">
    <property type="entry name" value="Aldolase_TIM"/>
</dbReference>
<dbReference type="InterPro" id="IPR011343">
    <property type="entry name" value="DeoC"/>
</dbReference>
<dbReference type="InterPro" id="IPR002915">
    <property type="entry name" value="DeoC/FbaB/LacD_aldolase"/>
</dbReference>
<dbReference type="InterPro" id="IPR028581">
    <property type="entry name" value="DeoC_typeI"/>
</dbReference>
<dbReference type="NCBIfam" id="TIGR00126">
    <property type="entry name" value="deoC"/>
    <property type="match status" value="1"/>
</dbReference>
<dbReference type="PANTHER" id="PTHR10889">
    <property type="entry name" value="DEOXYRIBOSE-PHOSPHATE ALDOLASE"/>
    <property type="match status" value="1"/>
</dbReference>
<dbReference type="PANTHER" id="PTHR10889:SF1">
    <property type="entry name" value="DEOXYRIBOSE-PHOSPHATE ALDOLASE"/>
    <property type="match status" value="1"/>
</dbReference>
<dbReference type="Pfam" id="PF01791">
    <property type="entry name" value="DeoC"/>
    <property type="match status" value="1"/>
</dbReference>
<dbReference type="PIRSF" id="PIRSF001357">
    <property type="entry name" value="DeoC"/>
    <property type="match status" value="1"/>
</dbReference>
<dbReference type="SMART" id="SM01133">
    <property type="entry name" value="DeoC"/>
    <property type="match status" value="1"/>
</dbReference>
<dbReference type="SUPFAM" id="SSF51569">
    <property type="entry name" value="Aldolase"/>
    <property type="match status" value="1"/>
</dbReference>
<organism>
    <name type="scientific">Geobacillus kaustophilus (strain HTA426)</name>
    <dbReference type="NCBI Taxonomy" id="235909"/>
    <lineage>
        <taxon>Bacteria</taxon>
        <taxon>Bacillati</taxon>
        <taxon>Bacillota</taxon>
        <taxon>Bacilli</taxon>
        <taxon>Bacillales</taxon>
        <taxon>Anoxybacillaceae</taxon>
        <taxon>Geobacillus</taxon>
        <taxon>Geobacillus thermoleovorans group</taxon>
    </lineage>
</organism>
<evidence type="ECO:0000255" key="1">
    <source>
        <dbReference type="HAMAP-Rule" id="MF_00114"/>
    </source>
</evidence>
<evidence type="ECO:0000305" key="2"/>
<name>DEOC_GEOKA</name>
<gene>
    <name evidence="1" type="primary">deoC</name>
    <name type="ordered locus">GK2499</name>
</gene>
<reference key="1">
    <citation type="journal article" date="2004" name="Nucleic Acids Res.">
        <title>Thermoadaptation trait revealed by the genome sequence of thermophilic Geobacillus kaustophilus.</title>
        <authorList>
            <person name="Takami H."/>
            <person name="Takaki Y."/>
            <person name="Chee G.-J."/>
            <person name="Nishi S."/>
            <person name="Shimamura S."/>
            <person name="Suzuki H."/>
            <person name="Matsui S."/>
            <person name="Uchiyama I."/>
        </authorList>
    </citation>
    <scope>NUCLEOTIDE SEQUENCE [LARGE SCALE GENOMIC DNA]</scope>
    <source>
        <strain>HTA426</strain>
    </source>
</reference>
<sequence>MTMNIAKMIDHTLLKPEATEQQIVQLCTEAKQYGFASVCVNPTWVKTAARELSGTDVRVCTVIGFPLGATTPETKAFETTNAIENGAREVDMVINIGALKSGQDELVERDIRAVVEAAAGRALVKVIVETALLTDEEKVRACQLAVKAGADYVKTSTGFSGGGATVEDVALMRKTVGDRAGVKASGGVRDWKTAEAMINAGATRIGTSSGVAIVTGGTGRADY</sequence>
<proteinExistence type="evidence at protein level"/>
<comment type="function">
    <text evidence="1">Catalyzes a reversible aldol reaction between acetaldehyde and D-glyceraldehyde 3-phosphate to generate 2-deoxy-D-ribose 5-phosphate.</text>
</comment>
<comment type="catalytic activity">
    <reaction evidence="1">
        <text>2-deoxy-D-ribose 5-phosphate = D-glyceraldehyde 3-phosphate + acetaldehyde</text>
        <dbReference type="Rhea" id="RHEA:12821"/>
        <dbReference type="ChEBI" id="CHEBI:15343"/>
        <dbReference type="ChEBI" id="CHEBI:59776"/>
        <dbReference type="ChEBI" id="CHEBI:62877"/>
        <dbReference type="EC" id="4.1.2.4"/>
    </reaction>
</comment>
<comment type="pathway">
    <text evidence="1">Carbohydrate degradation; 2-deoxy-D-ribose 1-phosphate degradation; D-glyceraldehyde 3-phosphate and acetaldehyde from 2-deoxy-alpha-D-ribose 1-phosphate: step 2/2.</text>
</comment>
<comment type="subcellular location">
    <subcellularLocation>
        <location evidence="1">Cytoplasm</location>
    </subcellularLocation>
</comment>
<comment type="similarity">
    <text evidence="1">Belongs to the DeoC/FbaB aldolase family. DeoC type 1 subfamily.</text>
</comment>
<comment type="sequence caution" evidence="2">
    <conflict type="erroneous initiation">
        <sequence resource="EMBL-CDS" id="BAD76784"/>
    </conflict>
</comment>
<keyword id="KW-0002">3D-structure</keyword>
<keyword id="KW-0963">Cytoplasm</keyword>
<keyword id="KW-0456">Lyase</keyword>
<keyword id="KW-1185">Reference proteome</keyword>
<keyword id="KW-0704">Schiff base</keyword>
<feature type="chain" id="PRO_0000231541" description="Deoxyribose-phosphate aldolase">
    <location>
        <begin position="1"/>
        <end position="223"/>
    </location>
</feature>
<feature type="active site" description="Proton donor/acceptor" evidence="1">
    <location>
        <position position="91"/>
    </location>
</feature>
<feature type="active site" description="Schiff-base intermediate with acetaldehyde" evidence="1">
    <location>
        <position position="154"/>
    </location>
</feature>
<feature type="active site" description="Proton donor/acceptor" evidence="1">
    <location>
        <position position="183"/>
    </location>
</feature>
<accession>Q5KX02</accession>
<protein>
    <recommendedName>
        <fullName evidence="1">Deoxyribose-phosphate aldolase</fullName>
        <shortName evidence="1">DERA</shortName>
        <ecNumber evidence="1">4.1.2.4</ecNumber>
    </recommendedName>
    <alternativeName>
        <fullName evidence="1">2-deoxy-D-ribose 5-phosphate aldolase</fullName>
    </alternativeName>
    <alternativeName>
        <fullName evidence="1">Phosphodeoxyriboaldolase</fullName>
        <shortName evidence="1">Deoxyriboaldolase</shortName>
    </alternativeName>
</protein>